<comment type="function">
    <text evidence="2 3 4 5 6">Component of the ribosomal small subunit processome for the biogenesis of ribosomes, functions in pre-ribosomal RNA (pre-rRNA) processing (PubMed:28263972). Essential for embryonic development in part through the regulation of p53 pathway. Required for the expansion growth of intestine, liver and exocrine pancreas, but not endocrine pancreas. May not play a major role during the early stage of endodermal organogenesis. Also involved in the sympathetic neuronal development (PubMed:28263972). Triggers the degradation of p53/TP53 and Delta113p53 isoform in a ubiquitination pathway independent way (PubMed:23357851). Mediates, with CAPN3, the proteasome-independent degradation of p53/TP53 (PubMed:23357851, PubMed:27657329).</text>
</comment>
<comment type="subcellular location">
    <subcellularLocation>
        <location evidence="3 4">Nucleus</location>
        <location evidence="3 4">Nucleolus</location>
    </subcellularLocation>
</comment>
<comment type="tissue specificity">
    <text evidence="3 4">Mainly expressed in digestive organs at the later stage of organogenesis. Expressed in liver, gut and exocrine pancreas, but not in the islets.</text>
</comment>
<comment type="developmental stage">
    <text evidence="3">Highly expressed in the embryos at 12 hpf and 1 dpf and expressed at high level at 3 dpf and 4 dpf, but at a lower level at 5 dpf. At 2 dpf, ubiquitously expressed, but enriched in the mid and hindbrain boundary. Through 3-5 dpf, expressed mainly in the gut, liver, pancreas and pharynx.</text>
</comment>
<comment type="PTM">
    <text evidence="5">Phosphorylated. Phosphorylation is required to facilitate the nucleolar localzsation of CAPN3 and promote p53/TP53 degradation in the nucleolus which promotes cell cycle progression and liver development.</text>
</comment>
<comment type="disruption phenotype">
    <text evidence="3 4 5">Confers hypoplastic digestive organs and selectively up-regulates the expression of the Delta113p53 isoform but not p53, resulting in compromised organ growth in def mutant fish. Loss of function affects sympathetic neuronal development (PubMed:27657329).</text>
</comment>
<comment type="similarity">
    <text evidence="10">Belongs to the UTP25 family.</text>
</comment>
<proteinExistence type="evidence at protein level"/>
<reference key="1">
    <citation type="journal article" date="2002" name="Nat. Genet.">
        <title>Insertional mutagenesis in zebrafish rapidly identifies genes essential for early vertebrate development.</title>
        <authorList>
            <person name="Golling G."/>
            <person name="Amsterdam A."/>
            <person name="Sun Z."/>
            <person name="Antonelli M."/>
            <person name="Maldonado E."/>
            <person name="Chen W."/>
            <person name="Burgess S."/>
            <person name="Haldi M."/>
            <person name="Artzt K."/>
            <person name="Farrington S."/>
            <person name="Lin S.-Y."/>
            <person name="Nissen R.M."/>
            <person name="Hopkins N."/>
        </authorList>
    </citation>
    <scope>NUCLEOTIDE SEQUENCE [LARGE SCALE MRNA]</scope>
    <scope>FUNCTION</scope>
    <source>
        <tissue>Embryo</tissue>
    </source>
</reference>
<reference key="2">
    <citation type="submission" date="2003-09" db="EMBL/GenBank/DDBJ databases">
        <authorList>
            <consortium name="NIH - Zebrafish Gene Collection (ZGC) project"/>
        </authorList>
    </citation>
    <scope>NUCLEOTIDE SEQUENCE [LARGE SCALE MRNA]</scope>
    <source>
        <strain>AB</strain>
    </source>
</reference>
<reference key="3">
    <citation type="journal article" date="2005" name="Genes Dev.">
        <title>Loss of function of def selectively up-regulates Delta113p53 expression to arrest expansion growth of digestive organs in zebrafish.</title>
        <authorList>
            <person name="Chen J."/>
            <person name="Ruan H."/>
            <person name="Ng S.M."/>
            <person name="Gao C."/>
            <person name="Soo H.M."/>
            <person name="Wu W."/>
            <person name="Zhang Z."/>
            <person name="Wen Z."/>
            <person name="Lane D.P."/>
            <person name="Peng J."/>
        </authorList>
    </citation>
    <scope>FUNCTION</scope>
    <scope>SUBCELLULAR LOCATION</scope>
    <scope>TISSUE SPECIFICITY</scope>
    <scope>DEVELOPMENTAL STAGE</scope>
    <scope>DISRUPTION PHENOTYPE</scope>
</reference>
<reference key="4">
    <citation type="journal article" date="2013" name="Cell Res.">
        <title>Def defines a conserved nucleolar pathway that leads p53 to proteasome-independent degradation.</title>
        <authorList>
            <person name="Tao T."/>
            <person name="Shi H."/>
            <person name="Guan Y."/>
            <person name="Huang D."/>
            <person name="Chen Y."/>
            <person name="Lane D.P."/>
            <person name="Chen J."/>
            <person name="Peng J."/>
        </authorList>
    </citation>
    <scope>FUNCTION</scope>
    <scope>SUBCELLULAR LOCATION</scope>
    <scope>TISSUE SPECIFICITY</scope>
    <scope>DISRUPTION PHENOTYPE</scope>
</reference>
<reference key="5">
    <citation type="journal article" date="2016" name="PLoS Biol.">
        <title>Phosphorylation of Def Regulates Nucleolar p53 Turnover and Cell Cycle Progression through Def Recruitment of Calpain3.</title>
        <authorList>
            <person name="Guan Y."/>
            <person name="Huang D."/>
            <person name="Chen F."/>
            <person name="Gao C."/>
            <person name="Tao T."/>
            <person name="Shi H."/>
            <person name="Zhao S."/>
            <person name="Liao Z."/>
            <person name="Lo L.J."/>
            <person name="Wang Y."/>
            <person name="Chen J."/>
            <person name="Peng J."/>
        </authorList>
    </citation>
    <scope>FUNCTION</scope>
    <scope>INTERACTION WITH CAPN3</scope>
    <scope>PHOSPHORYLATION AT SER-50; SER-58; SER-62; SER-87 AND SER-92</scope>
    <scope>MUTAGENESIS OF SER-58; SER-62; SER-87 AND SER-92</scope>
</reference>
<reference key="6">
    <citation type="journal article" date="2017" name="Oncogene">
        <title>The pre-rRNA processing factor DEF is rate limiting for the pathogenesis of MYCN-driven neuroblastoma.</title>
        <authorList>
            <person name="Tao T."/>
            <person name="Sondalle S.B."/>
            <person name="Shi H."/>
            <person name="Zhu S."/>
            <person name="Perez-Atayde A.R."/>
            <person name="Peng J."/>
            <person name="Baserga S.J."/>
            <person name="Look A.T."/>
        </authorList>
    </citation>
    <scope>FUNCTION</scope>
    <scope>DISRUPTION PHENOTYPE</scope>
</reference>
<protein>
    <recommendedName>
        <fullName>U3 small nucleolar RNA-associated protein 25 homolog</fullName>
    </recommendedName>
    <alternativeName>
        <fullName>Digestive organ expansion factor</fullName>
    </alternativeName>
    <alternativeName>
        <fullName>UTP25 small subunit processor component</fullName>
    </alternativeName>
</protein>
<organism>
    <name type="scientific">Danio rerio</name>
    <name type="common">Zebrafish</name>
    <name type="synonym">Brachydanio rerio</name>
    <dbReference type="NCBI Taxonomy" id="7955"/>
    <lineage>
        <taxon>Eukaryota</taxon>
        <taxon>Metazoa</taxon>
        <taxon>Chordata</taxon>
        <taxon>Craniata</taxon>
        <taxon>Vertebrata</taxon>
        <taxon>Euteleostomi</taxon>
        <taxon>Actinopterygii</taxon>
        <taxon>Neopterygii</taxon>
        <taxon>Teleostei</taxon>
        <taxon>Ostariophysi</taxon>
        <taxon>Cypriniformes</taxon>
        <taxon>Danionidae</taxon>
        <taxon>Danioninae</taxon>
        <taxon>Danio</taxon>
    </lineage>
</organism>
<sequence length="753" mass="86802">MGKRRRGKQEIDNLTKKQKKHLKEFGEQHPFHDKVVERPEKTQILRLPDSPQRPEPDSEDDSDAEQPSAYQKLLSTMIQGDEDDVESEDEESEEEDNEEEAEVEGDSEEEVEDTDEEDGNDAEEVLEDKVEETSDKLQKKHPEKTNGDVEENEEAEMEGEFTDKKNEAAFCLETNMPAEGEENTAQQEQDEDMFVKHQEIELSEEEVGRISQGSKVKTQVKWAKLGVLQCMCPLERFPAIGQASSAPLPPIHKTLEANWHLLNLPFGAATDVTELQKEMLGLMGTYRDLYLANLSPLKEAKEVRSAYCLHALNHVLKANSRVLRNNAKLKESKNGDEDFRDQGLTRPKVLILVPFRDGALRVVQTFMTLLEPKGKKTDASNKKRFKEEYGEETDEKPPNLQRPDDYHAVFSGNIDDHFRIGMSILRHSMRLYAPFYSSDIIIASPLGLRTVLGAEGEKKRDHDFLSSIELLIVDQADVFLMQNWEHLLHVLEHLNLQPLDSHGVDFSRVRMWNLNNWAAYYRQTLVFSAIQEPQITNILTKHCHNYRGQVCSKTIPKIGSICQVLVQLPHVFQMFHSDSFMDQDARFQFFVDKILPQYRDSVMSHTFIYVPSYFDFVRLRNYLKKEDVSFANISEYSQRSEVSRARHYFQKGEKQFLLFSERFHFYKRYTIKGIHNLIFYGLPTYPHFYSEVCNMLQAGVREGGASVSFTCTALYSRYDVHRLAAITGADRAAQMLQSKKTTHLFITGEEKST</sequence>
<accession>Q6PEH4</accession>
<accession>Q8JHI5</accession>
<dbReference type="EMBL" id="AF506211">
    <property type="protein sequence ID" value="AAM34655.1"/>
    <property type="molecule type" value="mRNA"/>
</dbReference>
<dbReference type="EMBL" id="BC058062">
    <property type="protein sequence ID" value="AAH58062.1"/>
    <property type="molecule type" value="mRNA"/>
</dbReference>
<dbReference type="RefSeq" id="NP_775380.1">
    <property type="nucleotide sequence ID" value="NM_173273.1"/>
</dbReference>
<dbReference type="FunCoup" id="Q6PEH4">
    <property type="interactions" value="3212"/>
</dbReference>
<dbReference type="STRING" id="7955.ENSDARP00000011386"/>
<dbReference type="iPTMnet" id="Q6PEH4"/>
<dbReference type="PaxDb" id="7955-ENSDARP00000011386"/>
<dbReference type="Ensembl" id="ENSDART00000026726">
    <property type="protein sequence ID" value="ENSDARP00000011386"/>
    <property type="gene ID" value="ENSDARG00000017696"/>
</dbReference>
<dbReference type="GeneID" id="286787"/>
<dbReference type="KEGG" id="dre:286787"/>
<dbReference type="AGR" id="ZFIN:ZDB-GENE-021217-2"/>
<dbReference type="CTD" id="27042"/>
<dbReference type="ZFIN" id="ZDB-GENE-021217-2">
    <property type="gene designation" value="utp25"/>
</dbReference>
<dbReference type="eggNOG" id="KOG2340">
    <property type="taxonomic scope" value="Eukaryota"/>
</dbReference>
<dbReference type="HOGENOM" id="CLU_018705_1_1_1"/>
<dbReference type="InParanoid" id="Q6PEH4"/>
<dbReference type="OMA" id="QDRGDTF"/>
<dbReference type="OrthoDB" id="10264378at2759"/>
<dbReference type="PhylomeDB" id="Q6PEH4"/>
<dbReference type="TreeFam" id="TF105930"/>
<dbReference type="PRO" id="PR:Q6PEH4"/>
<dbReference type="Proteomes" id="UP000000437">
    <property type="component" value="Chromosome 13"/>
</dbReference>
<dbReference type="Bgee" id="ENSDARG00000017696">
    <property type="expression patterns" value="Expressed in gastrula and 30 other cell types or tissues"/>
</dbReference>
<dbReference type="ExpressionAtlas" id="Q6PEH4">
    <property type="expression patterns" value="baseline and differential"/>
</dbReference>
<dbReference type="GO" id="GO:0005730">
    <property type="term" value="C:nucleolus"/>
    <property type="evidence" value="ECO:0000314"/>
    <property type="project" value="UniProtKB"/>
</dbReference>
<dbReference type="GO" id="GO:0005634">
    <property type="term" value="C:nucleus"/>
    <property type="evidence" value="ECO:0000314"/>
    <property type="project" value="ZFIN"/>
</dbReference>
<dbReference type="GO" id="GO:0032040">
    <property type="term" value="C:small-subunit processome"/>
    <property type="evidence" value="ECO:0000318"/>
    <property type="project" value="GO_Central"/>
</dbReference>
<dbReference type="GO" id="GO:0019843">
    <property type="term" value="F:rRNA binding"/>
    <property type="evidence" value="ECO:0000318"/>
    <property type="project" value="GO_Central"/>
</dbReference>
<dbReference type="GO" id="GO:0034511">
    <property type="term" value="F:U3 snoRNA binding"/>
    <property type="evidence" value="ECO:0000318"/>
    <property type="project" value="GO_Central"/>
</dbReference>
<dbReference type="GO" id="GO:0048546">
    <property type="term" value="P:digestive tract morphogenesis"/>
    <property type="evidence" value="ECO:0000315"/>
    <property type="project" value="ZFIN"/>
</dbReference>
<dbReference type="GO" id="GO:0048568">
    <property type="term" value="P:embryonic organ development"/>
    <property type="evidence" value="ECO:0000315"/>
    <property type="project" value="UniProtKB"/>
</dbReference>
<dbReference type="GO" id="GO:0031017">
    <property type="term" value="P:exocrine pancreas development"/>
    <property type="evidence" value="ECO:0000315"/>
    <property type="project" value="ZFIN"/>
</dbReference>
<dbReference type="GO" id="GO:0090594">
    <property type="term" value="P:inflammatory response to wounding"/>
    <property type="evidence" value="ECO:0000315"/>
    <property type="project" value="ZFIN"/>
</dbReference>
<dbReference type="GO" id="GO:0000462">
    <property type="term" value="P:maturation of SSU-rRNA from tricistronic rRNA transcript (SSU-rRNA, 5.8S rRNA, LSU-rRNA)"/>
    <property type="evidence" value="ECO:0000315"/>
    <property type="project" value="ZFIN"/>
</dbReference>
<dbReference type="GO" id="GO:0035265">
    <property type="term" value="P:organ growth"/>
    <property type="evidence" value="ECO:0000315"/>
    <property type="project" value="ZFIN"/>
</dbReference>
<dbReference type="GO" id="GO:0030163">
    <property type="term" value="P:protein catabolic process"/>
    <property type="evidence" value="ECO:0000316"/>
    <property type="project" value="ZFIN"/>
</dbReference>
<dbReference type="GO" id="GO:0031648">
    <property type="term" value="P:protein destabilization"/>
    <property type="evidence" value="ECO:0000315"/>
    <property type="project" value="ZFIN"/>
</dbReference>
<dbReference type="GO" id="GO:1902570">
    <property type="term" value="P:protein localization to nucleolus"/>
    <property type="evidence" value="ECO:0000314"/>
    <property type="project" value="UniProtKB"/>
</dbReference>
<dbReference type="GO" id="GO:0042254">
    <property type="term" value="P:ribosome biogenesis"/>
    <property type="evidence" value="ECO:0000315"/>
    <property type="project" value="ZFIN"/>
</dbReference>
<dbReference type="GO" id="GO:0048485">
    <property type="term" value="P:sympathetic nervous system development"/>
    <property type="evidence" value="ECO:0000315"/>
    <property type="project" value="ZFIN"/>
</dbReference>
<dbReference type="Gene3D" id="3.40.50.300">
    <property type="entry name" value="P-loop containing nucleotide triphosphate hydrolases"/>
    <property type="match status" value="1"/>
</dbReference>
<dbReference type="InterPro" id="IPR027417">
    <property type="entry name" value="P-loop_NTPase"/>
</dbReference>
<dbReference type="InterPro" id="IPR010678">
    <property type="entry name" value="UTP25"/>
</dbReference>
<dbReference type="InterPro" id="IPR053939">
    <property type="entry name" value="UTP25_C"/>
</dbReference>
<dbReference type="InterPro" id="IPR053940">
    <property type="entry name" value="UTP25_NTPase-like"/>
</dbReference>
<dbReference type="PANTHER" id="PTHR12933">
    <property type="entry name" value="ORF PROTEIN-RELATED"/>
    <property type="match status" value="1"/>
</dbReference>
<dbReference type="PANTHER" id="PTHR12933:SF0">
    <property type="entry name" value="U3 SMALL NUCLEOLAR RNA-ASSOCIATED PROTEIN 25 HOMOLOG"/>
    <property type="match status" value="1"/>
</dbReference>
<dbReference type="Pfam" id="PF06862">
    <property type="entry name" value="Utp25_C"/>
    <property type="match status" value="1"/>
</dbReference>
<dbReference type="Pfam" id="PF22916">
    <property type="entry name" value="UTP25_NTPase-like"/>
    <property type="match status" value="1"/>
</dbReference>
<dbReference type="SUPFAM" id="SSF52540">
    <property type="entry name" value="P-loop containing nucleoside triphosphate hydrolases"/>
    <property type="match status" value="1"/>
</dbReference>
<keyword id="KW-0217">Developmental protein</keyword>
<keyword id="KW-0539">Nucleus</keyword>
<keyword id="KW-0597">Phosphoprotein</keyword>
<keyword id="KW-1185">Reference proteome</keyword>
<feature type="chain" id="PRO_0000254153" description="U3 small nucleolar RNA-associated protein 25 homolog">
    <location>
        <begin position="1"/>
        <end position="753"/>
    </location>
</feature>
<feature type="region of interest" description="Promotes p53/TP53 degradation" evidence="4">
    <location>
        <begin position="1"/>
        <end position="189"/>
    </location>
</feature>
<feature type="region of interest" description="Disordered" evidence="1">
    <location>
        <begin position="1"/>
        <end position="160"/>
    </location>
</feature>
<feature type="region of interest" description="Disordered" evidence="1">
    <location>
        <begin position="377"/>
        <end position="402"/>
    </location>
</feature>
<feature type="region of interest" description="Promotes p53/TP53 degradation" evidence="4">
    <location>
        <begin position="566"/>
        <end position="627"/>
    </location>
</feature>
<feature type="region of interest" description="Represses p53/TP53 degradation" evidence="4">
    <location>
        <begin position="628"/>
        <end position="689"/>
    </location>
</feature>
<feature type="compositionally biased region" description="Basic and acidic residues" evidence="1">
    <location>
        <begin position="23"/>
        <end position="43"/>
    </location>
</feature>
<feature type="compositionally biased region" description="Acidic residues" evidence="1">
    <location>
        <begin position="80"/>
        <end position="126"/>
    </location>
</feature>
<feature type="compositionally biased region" description="Basic and acidic residues" evidence="1">
    <location>
        <begin position="127"/>
        <end position="137"/>
    </location>
</feature>
<feature type="compositionally biased region" description="Acidic residues" evidence="1">
    <location>
        <begin position="148"/>
        <end position="160"/>
    </location>
</feature>
<feature type="compositionally biased region" description="Basic and acidic residues" evidence="1">
    <location>
        <begin position="377"/>
        <end position="388"/>
    </location>
</feature>
<feature type="modified residue" description="Phosphoserine" evidence="5">
    <location>
        <position position="50"/>
    </location>
</feature>
<feature type="modified residue" description="Phosphoserine" evidence="5">
    <location>
        <position position="58"/>
    </location>
</feature>
<feature type="modified residue" description="Phosphoserine" evidence="5">
    <location>
        <position position="62"/>
    </location>
</feature>
<feature type="modified residue" description="Phosphoserine" evidence="5">
    <location>
        <position position="87"/>
    </location>
</feature>
<feature type="modified residue" description="Phosphoserine" evidence="5">
    <location>
        <position position="92"/>
    </location>
</feature>
<feature type="mutagenesis site" description="Decreases p53/TP53 degradation, cell cycle progression and liver development; when associated with A-62." evidence="5">
    <original>S</original>
    <variation>A</variation>
    <location>
        <position position="58"/>
    </location>
</feature>
<feature type="mutagenesis site" description="Decreases p53/TP53 degradation, cell cycle progression and liver development; when associated with A-58." evidence="5">
    <original>S</original>
    <variation>A</variation>
    <location>
        <position position="62"/>
    </location>
</feature>
<feature type="mutagenesis site" description="Decreases nucleolar localzsation of CAPN3, p53/TP53 degradation, cell cycle progression and liver development; when associated with A-92." evidence="5">
    <original>S</original>
    <variation>A</variation>
    <location>
        <position position="87"/>
    </location>
</feature>
<feature type="mutagenesis site" description="Decreases nucleolar localzsation of CAPN3, p53/TP53 degradation, cell cycle progression and liver development; when associated with A-87." evidence="5">
    <original>S</original>
    <variation>A</variation>
    <location>
        <position position="92"/>
    </location>
</feature>
<feature type="sequence conflict" description="In Ref. 1; AAM34655." evidence="10" ref="1">
    <original>G</original>
    <variation>C</variation>
    <location>
        <position position="7"/>
    </location>
</feature>
<feature type="sequence conflict" description="In Ref. 2; AAH58062." evidence="10" ref="2">
    <original>D</original>
    <variation>E</variation>
    <location>
        <position position="49"/>
    </location>
</feature>
<feature type="sequence conflict" description="In Ref. 1; AAM34655." evidence="10" ref="1">
    <original>Q</original>
    <variation>R</variation>
    <location>
        <position position="79"/>
    </location>
</feature>
<feature type="sequence conflict" description="In Ref. 1; AAM34655." evidence="10" ref="1">
    <original>EED</original>
    <variation>VEE</variation>
    <location>
        <begin position="116"/>
        <end position="118"/>
    </location>
</feature>
<feature type="sequence conflict" description="In Ref. 1; AAM34655." evidence="10" ref="1">
    <original>C</original>
    <variation>S</variation>
    <location>
        <position position="232"/>
    </location>
</feature>
<feature type="sequence conflict" description="In Ref. 1; AAM34655." evidence="10" ref="1">
    <original>S</original>
    <variation>N</variation>
    <location>
        <position position="305"/>
    </location>
</feature>
<feature type="sequence conflict" description="In Ref. 2; AAH58062." evidence="10" ref="2">
    <original>D</original>
    <variation>Y</variation>
    <location>
        <position position="415"/>
    </location>
</feature>
<feature type="sequence conflict" description="In Ref. 1; AAM34655." evidence="10" ref="1">
    <original>G</original>
    <variation>S</variation>
    <location>
        <position position="447"/>
    </location>
</feature>
<feature type="sequence conflict" description="In Ref. 1; AAM34655." evidence="10" ref="1">
    <original>F</original>
    <variation>S</variation>
    <location>
        <position position="587"/>
    </location>
</feature>
<feature type="sequence conflict" description="In Ref. 1; AAM34655." evidence="10" ref="1">
    <original>H</original>
    <variation>D</variation>
    <location>
        <position position="605"/>
    </location>
</feature>
<feature type="sequence conflict" description="In Ref. 1; AAM34655." evidence="10" ref="1">
    <original>P</original>
    <variation>R</variation>
    <location>
        <position position="611"/>
    </location>
</feature>
<feature type="sequence conflict" description="In Ref. 1; AAM34655." evidence="10" ref="1">
    <original>F</original>
    <variation>L</variation>
    <location>
        <position position="616"/>
    </location>
</feature>
<feature type="sequence conflict" description="In Ref. 1; AAM34655." evidence="10" ref="1">
    <original>L</original>
    <variation>M</variation>
    <location>
        <position position="623"/>
    </location>
</feature>
<feature type="sequence conflict" description="In Ref. 1; AAM34655." evidence="10" ref="1">
    <original>A</original>
    <variation>V</variation>
    <location>
        <position position="631"/>
    </location>
</feature>
<feature type="sequence conflict" description="In Ref. 1; AAM34655." evidence="10" ref="1">
    <original>Y</original>
    <variation>H</variation>
    <location>
        <position position="669"/>
    </location>
</feature>
<feature type="sequence conflict" description="In Ref. 1; AAM34655." evidence="10" ref="1">
    <original>S</original>
    <variation>N</variation>
    <location>
        <position position="752"/>
    </location>
</feature>
<gene>
    <name type="primary">utp25</name>
    <name evidence="7 8 9" type="synonym">def</name>
    <name type="synonym">diexf</name>
</gene>
<evidence type="ECO:0000256" key="1">
    <source>
        <dbReference type="SAM" id="MobiDB-lite"/>
    </source>
</evidence>
<evidence type="ECO:0000269" key="2">
    <source>
    </source>
</evidence>
<evidence type="ECO:0000269" key="3">
    <source>
    </source>
</evidence>
<evidence type="ECO:0000269" key="4">
    <source>
    </source>
</evidence>
<evidence type="ECO:0000269" key="5">
    <source>
    </source>
</evidence>
<evidence type="ECO:0000269" key="6">
    <source>
    </source>
</evidence>
<evidence type="ECO:0000303" key="7">
    <source>
    </source>
</evidence>
<evidence type="ECO:0000303" key="8">
    <source>
    </source>
</evidence>
<evidence type="ECO:0000303" key="9">
    <source>
    </source>
</evidence>
<evidence type="ECO:0000305" key="10"/>
<name>UTP25_DANRE</name>